<proteinExistence type="inferred from homology"/>
<comment type="function">
    <text evidence="1">Required for accurate and efficient protein synthesis under certain stress conditions. May act as a fidelity factor of the translation reaction, by catalyzing a one-codon backward translocation of tRNAs on improperly translocated ribosomes. Back-translocation proceeds from a post-translocation (POST) complex to a pre-translocation (PRE) complex, thus giving elongation factor G a second chance to translocate the tRNAs correctly. Binds to ribosomes in a GTP-dependent manner.</text>
</comment>
<comment type="catalytic activity">
    <reaction evidence="1">
        <text>GTP + H2O = GDP + phosphate + H(+)</text>
        <dbReference type="Rhea" id="RHEA:19669"/>
        <dbReference type="ChEBI" id="CHEBI:15377"/>
        <dbReference type="ChEBI" id="CHEBI:15378"/>
        <dbReference type="ChEBI" id="CHEBI:37565"/>
        <dbReference type="ChEBI" id="CHEBI:43474"/>
        <dbReference type="ChEBI" id="CHEBI:58189"/>
        <dbReference type="EC" id="3.6.5.n1"/>
    </reaction>
</comment>
<comment type="subcellular location">
    <subcellularLocation>
        <location evidence="1">Cell inner membrane</location>
        <topology evidence="1">Peripheral membrane protein</topology>
        <orientation evidence="1">Cytoplasmic side</orientation>
    </subcellularLocation>
</comment>
<comment type="similarity">
    <text evidence="1">Belongs to the TRAFAC class translation factor GTPase superfamily. Classic translation factor GTPase family. LepA subfamily.</text>
</comment>
<reference key="1">
    <citation type="journal article" date="2006" name="Proc. Natl. Acad. Sci. U.S.A.">
        <title>Genome reduction in Leptospira borgpetersenii reflects limited transmission potential.</title>
        <authorList>
            <person name="Bulach D.M."/>
            <person name="Zuerner R.L."/>
            <person name="Wilson P."/>
            <person name="Seemann T."/>
            <person name="McGrath A."/>
            <person name="Cullen P.A."/>
            <person name="Davis J."/>
            <person name="Johnson M."/>
            <person name="Kuczek E."/>
            <person name="Alt D.P."/>
            <person name="Peterson-Burch B."/>
            <person name="Coppel R.L."/>
            <person name="Rood J.I."/>
            <person name="Davies J.K."/>
            <person name="Adler B."/>
        </authorList>
    </citation>
    <scope>NUCLEOTIDE SEQUENCE [LARGE SCALE GENOMIC DNA]</scope>
    <source>
        <strain>JB197</strain>
    </source>
</reference>
<dbReference type="EC" id="3.6.5.n1" evidence="1"/>
<dbReference type="EMBL" id="CP000350">
    <property type="protein sequence ID" value="ABJ76081.1"/>
    <property type="molecule type" value="Genomic_DNA"/>
</dbReference>
<dbReference type="RefSeq" id="WP_011670305.1">
    <property type="nucleotide sequence ID" value="NC_008510.1"/>
</dbReference>
<dbReference type="SMR" id="Q04SN9"/>
<dbReference type="KEGG" id="lbj:LBJ_1508"/>
<dbReference type="HOGENOM" id="CLU_009995_3_3_12"/>
<dbReference type="Proteomes" id="UP000000656">
    <property type="component" value="Chromosome 1"/>
</dbReference>
<dbReference type="GO" id="GO:0005886">
    <property type="term" value="C:plasma membrane"/>
    <property type="evidence" value="ECO:0007669"/>
    <property type="project" value="UniProtKB-SubCell"/>
</dbReference>
<dbReference type="GO" id="GO:0005525">
    <property type="term" value="F:GTP binding"/>
    <property type="evidence" value="ECO:0007669"/>
    <property type="project" value="UniProtKB-UniRule"/>
</dbReference>
<dbReference type="GO" id="GO:0003924">
    <property type="term" value="F:GTPase activity"/>
    <property type="evidence" value="ECO:0007669"/>
    <property type="project" value="UniProtKB-UniRule"/>
</dbReference>
<dbReference type="GO" id="GO:0043022">
    <property type="term" value="F:ribosome binding"/>
    <property type="evidence" value="ECO:0007669"/>
    <property type="project" value="UniProtKB-UniRule"/>
</dbReference>
<dbReference type="GO" id="GO:0003746">
    <property type="term" value="F:translation elongation factor activity"/>
    <property type="evidence" value="ECO:0007669"/>
    <property type="project" value="UniProtKB-UniRule"/>
</dbReference>
<dbReference type="GO" id="GO:0045727">
    <property type="term" value="P:positive regulation of translation"/>
    <property type="evidence" value="ECO:0007669"/>
    <property type="project" value="UniProtKB-UniRule"/>
</dbReference>
<dbReference type="CDD" id="cd03699">
    <property type="entry name" value="EF4_II"/>
    <property type="match status" value="1"/>
</dbReference>
<dbReference type="CDD" id="cd16260">
    <property type="entry name" value="EF4_III"/>
    <property type="match status" value="1"/>
</dbReference>
<dbReference type="CDD" id="cd01890">
    <property type="entry name" value="LepA"/>
    <property type="match status" value="1"/>
</dbReference>
<dbReference type="CDD" id="cd03709">
    <property type="entry name" value="lepA_C"/>
    <property type="match status" value="1"/>
</dbReference>
<dbReference type="FunFam" id="3.40.50.300:FF:000078">
    <property type="entry name" value="Elongation factor 4"/>
    <property type="match status" value="1"/>
</dbReference>
<dbReference type="FunFam" id="2.40.30.10:FF:000015">
    <property type="entry name" value="Translation factor GUF1, mitochondrial"/>
    <property type="match status" value="1"/>
</dbReference>
<dbReference type="FunFam" id="3.30.70.240:FF:000007">
    <property type="entry name" value="Translation factor GUF1, mitochondrial"/>
    <property type="match status" value="1"/>
</dbReference>
<dbReference type="FunFam" id="3.30.70.2570:FF:000001">
    <property type="entry name" value="Translation factor GUF1, mitochondrial"/>
    <property type="match status" value="1"/>
</dbReference>
<dbReference type="FunFam" id="3.30.70.870:FF:000004">
    <property type="entry name" value="Translation factor GUF1, mitochondrial"/>
    <property type="match status" value="1"/>
</dbReference>
<dbReference type="Gene3D" id="3.30.70.240">
    <property type="match status" value="1"/>
</dbReference>
<dbReference type="Gene3D" id="3.30.70.2570">
    <property type="entry name" value="Elongation factor 4, C-terminal domain"/>
    <property type="match status" value="1"/>
</dbReference>
<dbReference type="Gene3D" id="3.30.70.870">
    <property type="entry name" value="Elongation Factor G (Translational Gtpase), domain 3"/>
    <property type="match status" value="1"/>
</dbReference>
<dbReference type="Gene3D" id="3.40.50.300">
    <property type="entry name" value="P-loop containing nucleotide triphosphate hydrolases"/>
    <property type="match status" value="1"/>
</dbReference>
<dbReference type="Gene3D" id="2.40.30.10">
    <property type="entry name" value="Translation factors"/>
    <property type="match status" value="1"/>
</dbReference>
<dbReference type="HAMAP" id="MF_00071">
    <property type="entry name" value="LepA"/>
    <property type="match status" value="1"/>
</dbReference>
<dbReference type="InterPro" id="IPR006297">
    <property type="entry name" value="EF-4"/>
</dbReference>
<dbReference type="InterPro" id="IPR035647">
    <property type="entry name" value="EFG_III/V"/>
</dbReference>
<dbReference type="InterPro" id="IPR000640">
    <property type="entry name" value="EFG_V-like"/>
</dbReference>
<dbReference type="InterPro" id="IPR004161">
    <property type="entry name" value="EFTu-like_2"/>
</dbReference>
<dbReference type="InterPro" id="IPR031157">
    <property type="entry name" value="G_TR_CS"/>
</dbReference>
<dbReference type="InterPro" id="IPR038363">
    <property type="entry name" value="LepA_C_sf"/>
</dbReference>
<dbReference type="InterPro" id="IPR013842">
    <property type="entry name" value="LepA_CTD"/>
</dbReference>
<dbReference type="InterPro" id="IPR035654">
    <property type="entry name" value="LepA_IV"/>
</dbReference>
<dbReference type="InterPro" id="IPR027417">
    <property type="entry name" value="P-loop_NTPase"/>
</dbReference>
<dbReference type="InterPro" id="IPR005225">
    <property type="entry name" value="Small_GTP-bd"/>
</dbReference>
<dbReference type="InterPro" id="IPR000795">
    <property type="entry name" value="T_Tr_GTP-bd_dom"/>
</dbReference>
<dbReference type="InterPro" id="IPR009000">
    <property type="entry name" value="Transl_B-barrel_sf"/>
</dbReference>
<dbReference type="NCBIfam" id="TIGR01393">
    <property type="entry name" value="lepA"/>
    <property type="match status" value="1"/>
</dbReference>
<dbReference type="NCBIfam" id="TIGR00231">
    <property type="entry name" value="small_GTP"/>
    <property type="match status" value="1"/>
</dbReference>
<dbReference type="PANTHER" id="PTHR43512:SF4">
    <property type="entry name" value="TRANSLATION FACTOR GUF1 HOMOLOG, CHLOROPLASTIC"/>
    <property type="match status" value="1"/>
</dbReference>
<dbReference type="PANTHER" id="PTHR43512">
    <property type="entry name" value="TRANSLATION FACTOR GUF1-RELATED"/>
    <property type="match status" value="1"/>
</dbReference>
<dbReference type="Pfam" id="PF00679">
    <property type="entry name" value="EFG_C"/>
    <property type="match status" value="1"/>
</dbReference>
<dbReference type="Pfam" id="PF00009">
    <property type="entry name" value="GTP_EFTU"/>
    <property type="match status" value="1"/>
</dbReference>
<dbReference type="Pfam" id="PF03144">
    <property type="entry name" value="GTP_EFTU_D2"/>
    <property type="match status" value="1"/>
</dbReference>
<dbReference type="Pfam" id="PF06421">
    <property type="entry name" value="LepA_C"/>
    <property type="match status" value="1"/>
</dbReference>
<dbReference type="PRINTS" id="PR00315">
    <property type="entry name" value="ELONGATNFCT"/>
</dbReference>
<dbReference type="SMART" id="SM00838">
    <property type="entry name" value="EFG_C"/>
    <property type="match status" value="1"/>
</dbReference>
<dbReference type="SUPFAM" id="SSF54980">
    <property type="entry name" value="EF-G C-terminal domain-like"/>
    <property type="match status" value="2"/>
</dbReference>
<dbReference type="SUPFAM" id="SSF52540">
    <property type="entry name" value="P-loop containing nucleoside triphosphate hydrolases"/>
    <property type="match status" value="1"/>
</dbReference>
<dbReference type="SUPFAM" id="SSF50447">
    <property type="entry name" value="Translation proteins"/>
    <property type="match status" value="1"/>
</dbReference>
<dbReference type="PROSITE" id="PS00301">
    <property type="entry name" value="G_TR_1"/>
    <property type="match status" value="1"/>
</dbReference>
<dbReference type="PROSITE" id="PS51722">
    <property type="entry name" value="G_TR_2"/>
    <property type="match status" value="1"/>
</dbReference>
<feature type="chain" id="PRO_1000032015" description="Elongation factor 4">
    <location>
        <begin position="1"/>
        <end position="601"/>
    </location>
</feature>
<feature type="domain" description="tr-type G">
    <location>
        <begin position="6"/>
        <end position="188"/>
    </location>
</feature>
<feature type="binding site" evidence="1">
    <location>
        <begin position="18"/>
        <end position="23"/>
    </location>
    <ligand>
        <name>GTP</name>
        <dbReference type="ChEBI" id="CHEBI:37565"/>
    </ligand>
</feature>
<feature type="binding site" evidence="1">
    <location>
        <begin position="135"/>
        <end position="138"/>
    </location>
    <ligand>
        <name>GTP</name>
        <dbReference type="ChEBI" id="CHEBI:37565"/>
    </ligand>
</feature>
<gene>
    <name evidence="1" type="primary">lepA</name>
    <name type="ordered locus">LBJ_1508</name>
</gene>
<evidence type="ECO:0000255" key="1">
    <source>
        <dbReference type="HAMAP-Rule" id="MF_00071"/>
    </source>
</evidence>
<sequence>MSDKQQFIRNFSIIAHIDHGKSTLADRLLEIGQVTNDRTKKDQILDSMDIERERGITIKANNATFDYLADDGNTYTMNLLDTPGHVDFTYEVSRSLKACEGVLLIVDASQGVEAQTLANLYLAMEQDLEILPVMNKIDLPAADVEKTKIQIEESLGLDSEKAVAISAKTGLNVKAVLEAITKEIPAPKGDPKGPLKALIYDSYFDPYMGVVIKIRVFDGSIKKGDRFLIMSTGKDFTVNEVGINRIALTPTDGLGAGEVGYLIAGIKKVSDAKTGDTITLFSNPTKESIPGYKEAKPMVFSGLYPINGEQFDELVDAIEKLKLNDAALIFEKESSVALGFGFRVGYLGLLHMEIVQERLEREFNLDLITTAPSVKYIIRKKSGEVEEIDNPSRFPEPITIESTEEPYVKATVITPNEYVGNIMALAMDKRGIQLDTVYLTQDKVQLTYELPLAELIFEFYDKLKSFTRGYASLDYEPSGYRISQLVKMDILVNGEPVDALSMIVHRTKAEQRGREIIEKLKDLIPRHQFMIPIQAAVGGKILARESISALRKNVTAKCYGGDITRKKKLLEKQKEGKKRMKQIGNVEIPQEAFLAVLKTNN</sequence>
<accession>Q04SN9</accession>
<keyword id="KW-0997">Cell inner membrane</keyword>
<keyword id="KW-1003">Cell membrane</keyword>
<keyword id="KW-0342">GTP-binding</keyword>
<keyword id="KW-0378">Hydrolase</keyword>
<keyword id="KW-0472">Membrane</keyword>
<keyword id="KW-0547">Nucleotide-binding</keyword>
<keyword id="KW-0648">Protein biosynthesis</keyword>
<name>LEPA_LEPBJ</name>
<protein>
    <recommendedName>
        <fullName evidence="1">Elongation factor 4</fullName>
        <shortName evidence="1">EF-4</shortName>
        <ecNumber evidence="1">3.6.5.n1</ecNumber>
    </recommendedName>
    <alternativeName>
        <fullName evidence="1">Ribosomal back-translocase LepA</fullName>
    </alternativeName>
</protein>
<organism>
    <name type="scientific">Leptospira borgpetersenii serovar Hardjo-bovis (strain JB197)</name>
    <dbReference type="NCBI Taxonomy" id="355277"/>
    <lineage>
        <taxon>Bacteria</taxon>
        <taxon>Pseudomonadati</taxon>
        <taxon>Spirochaetota</taxon>
        <taxon>Spirochaetia</taxon>
        <taxon>Leptospirales</taxon>
        <taxon>Leptospiraceae</taxon>
        <taxon>Leptospira</taxon>
    </lineage>
</organism>